<proteinExistence type="inferred from homology"/>
<dbReference type="EMBL" id="CP000939">
    <property type="protein sequence ID" value="ACA46591.1"/>
    <property type="molecule type" value="Genomic_DNA"/>
</dbReference>
<dbReference type="RefSeq" id="WP_003399022.1">
    <property type="nucleotide sequence ID" value="NC_010516.1"/>
</dbReference>
<dbReference type="SMR" id="B1IDA0"/>
<dbReference type="KEGG" id="cbb:CLD_0564"/>
<dbReference type="HOGENOM" id="CLU_030805_9_3_9"/>
<dbReference type="Proteomes" id="UP000008541">
    <property type="component" value="Chromosome"/>
</dbReference>
<dbReference type="CDD" id="cd00885">
    <property type="entry name" value="cinA"/>
    <property type="match status" value="1"/>
</dbReference>
<dbReference type="Gene3D" id="3.30.70.2860">
    <property type="match status" value="1"/>
</dbReference>
<dbReference type="Gene3D" id="3.90.950.20">
    <property type="entry name" value="CinA-like"/>
    <property type="match status" value="1"/>
</dbReference>
<dbReference type="Gene3D" id="3.40.980.10">
    <property type="entry name" value="MoaB/Mog-like domain"/>
    <property type="match status" value="1"/>
</dbReference>
<dbReference type="HAMAP" id="MF_00226_B">
    <property type="entry name" value="CinA_B"/>
    <property type="match status" value="1"/>
</dbReference>
<dbReference type="InterPro" id="IPR050101">
    <property type="entry name" value="CinA"/>
</dbReference>
<dbReference type="InterPro" id="IPR036653">
    <property type="entry name" value="CinA-like_C"/>
</dbReference>
<dbReference type="InterPro" id="IPR008136">
    <property type="entry name" value="CinA_C"/>
</dbReference>
<dbReference type="InterPro" id="IPR041424">
    <property type="entry name" value="CinA_KH"/>
</dbReference>
<dbReference type="InterPro" id="IPR008135">
    <property type="entry name" value="Competence-induced_CinA"/>
</dbReference>
<dbReference type="InterPro" id="IPR036425">
    <property type="entry name" value="MoaB/Mog-like_dom_sf"/>
</dbReference>
<dbReference type="InterPro" id="IPR001453">
    <property type="entry name" value="MoaB/Mog_dom"/>
</dbReference>
<dbReference type="NCBIfam" id="TIGR00200">
    <property type="entry name" value="cinA_nterm"/>
    <property type="match status" value="1"/>
</dbReference>
<dbReference type="NCBIfam" id="TIGR00177">
    <property type="entry name" value="molyb_syn"/>
    <property type="match status" value="1"/>
</dbReference>
<dbReference type="NCBIfam" id="TIGR00199">
    <property type="entry name" value="PncC_domain"/>
    <property type="match status" value="1"/>
</dbReference>
<dbReference type="NCBIfam" id="NF001813">
    <property type="entry name" value="PRK00549.1"/>
    <property type="match status" value="1"/>
</dbReference>
<dbReference type="PANTHER" id="PTHR13939">
    <property type="entry name" value="NICOTINAMIDE-NUCLEOTIDE AMIDOHYDROLASE PNCC"/>
    <property type="match status" value="1"/>
</dbReference>
<dbReference type="PANTHER" id="PTHR13939:SF0">
    <property type="entry name" value="NMN AMIDOHYDROLASE-LIKE PROTEIN YFAY"/>
    <property type="match status" value="1"/>
</dbReference>
<dbReference type="Pfam" id="PF02464">
    <property type="entry name" value="CinA"/>
    <property type="match status" value="1"/>
</dbReference>
<dbReference type="Pfam" id="PF18146">
    <property type="entry name" value="CinA_KH"/>
    <property type="match status" value="1"/>
</dbReference>
<dbReference type="Pfam" id="PF00994">
    <property type="entry name" value="MoCF_biosynth"/>
    <property type="match status" value="1"/>
</dbReference>
<dbReference type="PIRSF" id="PIRSF006728">
    <property type="entry name" value="CinA"/>
    <property type="match status" value="1"/>
</dbReference>
<dbReference type="SMART" id="SM00852">
    <property type="entry name" value="MoCF_biosynth"/>
    <property type="match status" value="1"/>
</dbReference>
<dbReference type="SUPFAM" id="SSF142433">
    <property type="entry name" value="CinA-like"/>
    <property type="match status" value="1"/>
</dbReference>
<dbReference type="SUPFAM" id="SSF53218">
    <property type="entry name" value="Molybdenum cofactor biosynthesis proteins"/>
    <property type="match status" value="1"/>
</dbReference>
<reference key="1">
    <citation type="journal article" date="2007" name="PLoS ONE">
        <title>Analysis of the neurotoxin complex genes in Clostridium botulinum A1-A4 and B1 strains: BoNT/A3, /Ba4 and /B1 clusters are located within plasmids.</title>
        <authorList>
            <person name="Smith T.J."/>
            <person name="Hill K.K."/>
            <person name="Foley B.T."/>
            <person name="Detter J.C."/>
            <person name="Munk A.C."/>
            <person name="Bruce D.C."/>
            <person name="Doggett N.A."/>
            <person name="Smith L.A."/>
            <person name="Marks J.D."/>
            <person name="Xie G."/>
            <person name="Brettin T.S."/>
        </authorList>
    </citation>
    <scope>NUCLEOTIDE SEQUENCE [LARGE SCALE GENOMIC DNA]</scope>
    <source>
        <strain>Okra / Type B1</strain>
    </source>
</reference>
<protein>
    <recommendedName>
        <fullName evidence="1">Putative competence-damage inducible protein</fullName>
    </recommendedName>
</protein>
<organism>
    <name type="scientific">Clostridium botulinum (strain Okra / Type B1)</name>
    <dbReference type="NCBI Taxonomy" id="498213"/>
    <lineage>
        <taxon>Bacteria</taxon>
        <taxon>Bacillati</taxon>
        <taxon>Bacillota</taxon>
        <taxon>Clostridia</taxon>
        <taxon>Eubacteriales</taxon>
        <taxon>Clostridiaceae</taxon>
        <taxon>Clostridium</taxon>
    </lineage>
</organism>
<comment type="similarity">
    <text evidence="1">Belongs to the CinA family.</text>
</comment>
<evidence type="ECO:0000255" key="1">
    <source>
        <dbReference type="HAMAP-Rule" id="MF_00226"/>
    </source>
</evidence>
<accession>B1IDA0</accession>
<gene>
    <name evidence="1" type="primary">cinA</name>
    <name type="ordered locus">CLD_0564</name>
</gene>
<feature type="chain" id="PRO_1000100311" description="Putative competence-damage inducible protein">
    <location>
        <begin position="1"/>
        <end position="409"/>
    </location>
</feature>
<name>CINA_CLOBK</name>
<sequence>MKAEILCVGTELLLGDIVNTNAQYISKELANIGIEVYHHSVIGDNENRLLKELERAFNYCDLVITTGGLGPTKDDLTKESVAKFFQEDLVLHEKSLKQIEKRLLCFNKSMTESNKKQAYFPKNCEILENPNGTAPGFIIEKDNKIAIILPGPPYEMQPMFENKVIPYLEKLTNCTIKSKVLRITGIGESDVADLISDILESQTNPTVAPYAKQGETTLRITAKANSEEKALNLIVPIEKEIRQILGDNIYSSGETSLEEVIASILVKRNLTIATAESCTGGLLAGKLINFPGISSVFLEGAITYSNESKINRLNVKKETLEKYTAVSKEVALEMAEGIAKSSGTNIGISTTGVAGPGGGTYDKPIGLVYIGLYINGKTFVKELNYSGNRQFIRNITVTRALDFLRRNLE</sequence>